<keyword id="KW-0012">Acyltransferase</keyword>
<keyword id="KW-0028">Amino-acid biosynthesis</keyword>
<keyword id="KW-0055">Arginine biosynthesis</keyword>
<keyword id="KW-0963">Cytoplasm</keyword>
<keyword id="KW-1185">Reference proteome</keyword>
<keyword id="KW-0808">Transferase</keyword>
<reference key="1">
    <citation type="journal article" date="2001" name="Nature">
        <title>Genome sequence of enterohaemorrhagic Escherichia coli O157:H7.</title>
        <authorList>
            <person name="Perna N.T."/>
            <person name="Plunkett G. III"/>
            <person name="Burland V."/>
            <person name="Mau B."/>
            <person name="Glasner J.D."/>
            <person name="Rose D.J."/>
            <person name="Mayhew G.F."/>
            <person name="Evans P.S."/>
            <person name="Gregor J."/>
            <person name="Kirkpatrick H.A."/>
            <person name="Posfai G."/>
            <person name="Hackett J."/>
            <person name="Klink S."/>
            <person name="Boutin A."/>
            <person name="Shao Y."/>
            <person name="Miller L."/>
            <person name="Grotbeck E.J."/>
            <person name="Davis N.W."/>
            <person name="Lim A."/>
            <person name="Dimalanta E.T."/>
            <person name="Potamousis K."/>
            <person name="Apodaca J."/>
            <person name="Anantharaman T.S."/>
            <person name="Lin J."/>
            <person name="Yen G."/>
            <person name="Schwartz D.C."/>
            <person name="Welch R.A."/>
            <person name="Blattner F.R."/>
        </authorList>
    </citation>
    <scope>NUCLEOTIDE SEQUENCE [LARGE SCALE GENOMIC DNA]</scope>
    <source>
        <strain>O157:H7 / EDL933 / ATCC 700927 / EHEC</strain>
    </source>
</reference>
<reference key="2">
    <citation type="journal article" date="2001" name="DNA Res.">
        <title>Complete genome sequence of enterohemorrhagic Escherichia coli O157:H7 and genomic comparison with a laboratory strain K-12.</title>
        <authorList>
            <person name="Hayashi T."/>
            <person name="Makino K."/>
            <person name="Ohnishi M."/>
            <person name="Kurokawa K."/>
            <person name="Ishii K."/>
            <person name="Yokoyama K."/>
            <person name="Han C.-G."/>
            <person name="Ohtsubo E."/>
            <person name="Nakayama K."/>
            <person name="Murata T."/>
            <person name="Tanaka M."/>
            <person name="Tobe T."/>
            <person name="Iida T."/>
            <person name="Takami H."/>
            <person name="Honda T."/>
            <person name="Sasakawa C."/>
            <person name="Ogasawara N."/>
            <person name="Yasunaga T."/>
            <person name="Kuhara S."/>
            <person name="Shiba T."/>
            <person name="Hattori M."/>
            <person name="Shinagawa H."/>
        </authorList>
    </citation>
    <scope>NUCLEOTIDE SEQUENCE [LARGE SCALE GENOMIC DNA]</scope>
    <source>
        <strain>O157:H7 / Sakai / RIMD 0509952 / EHEC</strain>
    </source>
</reference>
<accession>P0A6C7</accession>
<accession>O68009</accession>
<accession>O68010</accession>
<accession>O68011</accession>
<accession>O68012</accession>
<accession>O68013</accession>
<accession>P08205</accession>
<dbReference type="EC" id="2.3.1.1"/>
<dbReference type="EMBL" id="AE005174">
    <property type="protein sequence ID" value="AAG57929.1"/>
    <property type="molecule type" value="Genomic_DNA"/>
</dbReference>
<dbReference type="EMBL" id="BA000007">
    <property type="protein sequence ID" value="BAB37098.1"/>
    <property type="molecule type" value="Genomic_DNA"/>
</dbReference>
<dbReference type="PIR" id="C91088">
    <property type="entry name" value="C91088"/>
</dbReference>
<dbReference type="PIR" id="E85933">
    <property type="entry name" value="E85933"/>
</dbReference>
<dbReference type="RefSeq" id="NP_311702.1">
    <property type="nucleotide sequence ID" value="NC_002695.1"/>
</dbReference>
<dbReference type="RefSeq" id="WP_000237947.1">
    <property type="nucleotide sequence ID" value="NZ_VOAI01000003.1"/>
</dbReference>
<dbReference type="SMR" id="P0A6C7"/>
<dbReference type="STRING" id="155864.Z4135"/>
<dbReference type="GeneID" id="75203790"/>
<dbReference type="GeneID" id="916513"/>
<dbReference type="KEGG" id="ece:Z4135"/>
<dbReference type="KEGG" id="ecs:ECs_3675"/>
<dbReference type="PATRIC" id="fig|386585.9.peg.3842"/>
<dbReference type="eggNOG" id="COG0548">
    <property type="taxonomic scope" value="Bacteria"/>
</dbReference>
<dbReference type="eggNOG" id="COG1246">
    <property type="taxonomic scope" value="Bacteria"/>
</dbReference>
<dbReference type="HOGENOM" id="CLU_024773_0_0_6"/>
<dbReference type="OMA" id="KRKYNWD"/>
<dbReference type="UniPathway" id="UPA00068">
    <property type="reaction ID" value="UER00106"/>
</dbReference>
<dbReference type="Proteomes" id="UP000000558">
    <property type="component" value="Chromosome"/>
</dbReference>
<dbReference type="Proteomes" id="UP000002519">
    <property type="component" value="Chromosome"/>
</dbReference>
<dbReference type="GO" id="GO:0005737">
    <property type="term" value="C:cytoplasm"/>
    <property type="evidence" value="ECO:0007669"/>
    <property type="project" value="UniProtKB-SubCell"/>
</dbReference>
<dbReference type="GO" id="GO:0004042">
    <property type="term" value="F:L-glutamate N-acetyltransferase activity"/>
    <property type="evidence" value="ECO:0007669"/>
    <property type="project" value="UniProtKB-UniRule"/>
</dbReference>
<dbReference type="GO" id="GO:0006526">
    <property type="term" value="P:L-arginine biosynthetic process"/>
    <property type="evidence" value="ECO:0007669"/>
    <property type="project" value="UniProtKB-UniRule"/>
</dbReference>
<dbReference type="CDD" id="cd04237">
    <property type="entry name" value="AAK_NAGS-ABP"/>
    <property type="match status" value="1"/>
</dbReference>
<dbReference type="CDD" id="cd04301">
    <property type="entry name" value="NAT_SF"/>
    <property type="match status" value="1"/>
</dbReference>
<dbReference type="FunFam" id="3.40.1160.10:FF:000005">
    <property type="entry name" value="Amino-acid acetyltransferase"/>
    <property type="match status" value="1"/>
</dbReference>
<dbReference type="FunFam" id="3.40.630.30:FF:000009">
    <property type="entry name" value="Amino-acid acetyltransferase"/>
    <property type="match status" value="1"/>
</dbReference>
<dbReference type="Gene3D" id="3.40.630.30">
    <property type="match status" value="1"/>
</dbReference>
<dbReference type="Gene3D" id="3.40.1160.10">
    <property type="entry name" value="Acetylglutamate kinase-like"/>
    <property type="match status" value="1"/>
</dbReference>
<dbReference type="HAMAP" id="MF_01105">
    <property type="entry name" value="N_acetyl_glu_synth"/>
    <property type="match status" value="1"/>
</dbReference>
<dbReference type="InterPro" id="IPR036393">
    <property type="entry name" value="AceGlu_kinase-like_sf"/>
</dbReference>
<dbReference type="InterPro" id="IPR016181">
    <property type="entry name" value="Acyl_CoA_acyltransferase"/>
</dbReference>
<dbReference type="InterPro" id="IPR001048">
    <property type="entry name" value="Asp/Glu/Uridylate_kinase"/>
</dbReference>
<dbReference type="InterPro" id="IPR000182">
    <property type="entry name" value="GNAT_dom"/>
</dbReference>
<dbReference type="InterPro" id="IPR033719">
    <property type="entry name" value="NAGS_kin"/>
</dbReference>
<dbReference type="InterPro" id="IPR010167">
    <property type="entry name" value="NH2A_AcTrfase"/>
</dbReference>
<dbReference type="NCBIfam" id="TIGR01890">
    <property type="entry name" value="N-Ac-Glu-synth"/>
    <property type="match status" value="1"/>
</dbReference>
<dbReference type="NCBIfam" id="NF003641">
    <property type="entry name" value="PRK05279.1"/>
    <property type="match status" value="1"/>
</dbReference>
<dbReference type="PANTHER" id="PTHR30602">
    <property type="entry name" value="AMINO-ACID ACETYLTRANSFERASE"/>
    <property type="match status" value="1"/>
</dbReference>
<dbReference type="PANTHER" id="PTHR30602:SF12">
    <property type="entry name" value="AMINO-ACID ACETYLTRANSFERASE NAGS1, CHLOROPLASTIC-RELATED"/>
    <property type="match status" value="1"/>
</dbReference>
<dbReference type="Pfam" id="PF00696">
    <property type="entry name" value="AA_kinase"/>
    <property type="match status" value="1"/>
</dbReference>
<dbReference type="Pfam" id="PF00583">
    <property type="entry name" value="Acetyltransf_1"/>
    <property type="match status" value="1"/>
</dbReference>
<dbReference type="PIRSF" id="PIRSF000423">
    <property type="entry name" value="ArgA"/>
    <property type="match status" value="1"/>
</dbReference>
<dbReference type="SUPFAM" id="SSF55729">
    <property type="entry name" value="Acyl-CoA N-acyltransferases (Nat)"/>
    <property type="match status" value="1"/>
</dbReference>
<dbReference type="SUPFAM" id="SSF53633">
    <property type="entry name" value="Carbamate kinase-like"/>
    <property type="match status" value="1"/>
</dbReference>
<dbReference type="PROSITE" id="PS51186">
    <property type="entry name" value="GNAT"/>
    <property type="match status" value="1"/>
</dbReference>
<gene>
    <name type="primary">argA</name>
    <name type="ordered locus">Z4135</name>
    <name type="ordered locus">ECs3675</name>
</gene>
<protein>
    <recommendedName>
        <fullName>Amino-acid acetyltransferase</fullName>
        <ecNumber>2.3.1.1</ecNumber>
    </recommendedName>
    <alternativeName>
        <fullName>N-acetylglutamate synthase</fullName>
        <shortName>AGS</shortName>
        <shortName>NAGS</shortName>
    </alternativeName>
</protein>
<feature type="chain" id="PRO_0000186791" description="Amino-acid acetyltransferase">
    <location>
        <begin position="1"/>
        <end position="443"/>
    </location>
</feature>
<feature type="domain" description="N-acetyltransferase">
    <location>
        <begin position="296"/>
        <end position="443"/>
    </location>
</feature>
<proteinExistence type="inferred from homology"/>
<comment type="catalytic activity">
    <reaction>
        <text>L-glutamate + acetyl-CoA = N-acetyl-L-glutamate + CoA + H(+)</text>
        <dbReference type="Rhea" id="RHEA:24292"/>
        <dbReference type="ChEBI" id="CHEBI:15378"/>
        <dbReference type="ChEBI" id="CHEBI:29985"/>
        <dbReference type="ChEBI" id="CHEBI:44337"/>
        <dbReference type="ChEBI" id="CHEBI:57287"/>
        <dbReference type="ChEBI" id="CHEBI:57288"/>
        <dbReference type="EC" id="2.3.1.1"/>
    </reaction>
</comment>
<comment type="pathway">
    <text>Amino-acid biosynthesis; L-arginine biosynthesis; N(2)-acetyl-L-ornithine from L-glutamate: step 1/4.</text>
</comment>
<comment type="subunit">
    <text evidence="1">Homohexamer.</text>
</comment>
<comment type="subcellular location">
    <subcellularLocation>
        <location evidence="1">Cytoplasm</location>
    </subcellularLocation>
</comment>
<comment type="similarity">
    <text evidence="2">Belongs to the acetyltransferase family. ArgA subfamily.</text>
</comment>
<organism>
    <name type="scientific">Escherichia coli O157:H7</name>
    <dbReference type="NCBI Taxonomy" id="83334"/>
    <lineage>
        <taxon>Bacteria</taxon>
        <taxon>Pseudomonadati</taxon>
        <taxon>Pseudomonadota</taxon>
        <taxon>Gammaproteobacteria</taxon>
        <taxon>Enterobacterales</taxon>
        <taxon>Enterobacteriaceae</taxon>
        <taxon>Escherichia</taxon>
    </lineage>
</organism>
<evidence type="ECO:0000250" key="1"/>
<evidence type="ECO:0000305" key="2"/>
<name>ARGA_ECO57</name>
<sequence length="443" mass="49195">MVKERKTELVEGFRHSVPYINTHRGKTFVIMLGGEAIEHENFSSIVNDIGLLHSLGIRLVVVYGARPQIDANLAAHHHEPLYHKNIRVTDAKTLELVKQAAGTLQLDITARLSMSLNNTPLQGAHINVVSGNFIIAQPLGVDDGVDYCHSGRIRRIDEDAIHRQLDSGAIVLMGPVAVSVTGESFNLTSEEIATQLAIKLKAEKMIGFCSSQGVTNDDGDIVSELFPNEAQARVEAQEEKGDYNSGTVRFLRGAVKACRSGVRRCHLISYQEDGALLQELFSRDGIGTQIVMESAEQIRRATINDIGGILELIRPLEQQGILVRRSREQLEMEIDKFTIIQRDNTTIACAALYPFPEEKIGEMACVAVHPDYRSSSRGEVLLERIAAQAKQSGLSKLFVLTTRSIHWFQERGFTPVDIDLLPESKKQLYNYQRKSKVLMADLG</sequence>